<gene>
    <name type="primary">PRAF2</name>
    <name type="ORF">QtrA-11986</name>
</gene>
<name>PRAF2_MACFA</name>
<sequence>MSEVRLPPLRALDDFVLGSARLAAPDPCDPQRWCHRVINNLLYYQTNYLLCFGIGLALAGYVRPLHTLLSALVVAVALGMLVWAAETRAAVRRCRRSHPAACLAAVLAVGLLVLWVVGGACTFLLSIAGPVLLILVHASLRLRNLKNKIENKIESIGLKRTPMGLLLEALGQEQEAGS</sequence>
<accession>Q4R4I9</accession>
<dbReference type="EMBL" id="AB169905">
    <property type="protein sequence ID" value="BAE01986.1"/>
    <property type="molecule type" value="mRNA"/>
</dbReference>
<dbReference type="RefSeq" id="NP_001270208.1">
    <property type="nucleotide sequence ID" value="NM_001283279.1"/>
</dbReference>
<dbReference type="RefSeq" id="XP_045239569.1">
    <property type="nucleotide sequence ID" value="XM_045383634.1"/>
</dbReference>
<dbReference type="GeneID" id="101926174"/>
<dbReference type="VEuPathDB" id="HostDB:ENSMFAG00000032970"/>
<dbReference type="eggNOG" id="KOG4050">
    <property type="taxonomic scope" value="Eukaryota"/>
</dbReference>
<dbReference type="Proteomes" id="UP000233100">
    <property type="component" value="Chromosome X"/>
</dbReference>
<dbReference type="GO" id="GO:0010008">
    <property type="term" value="C:endosome membrane"/>
    <property type="evidence" value="ECO:0007669"/>
    <property type="project" value="UniProtKB-SubCell"/>
</dbReference>
<dbReference type="GO" id="GO:0015031">
    <property type="term" value="P:protein transport"/>
    <property type="evidence" value="ECO:0007669"/>
    <property type="project" value="UniProtKB-KW"/>
</dbReference>
<dbReference type="InterPro" id="IPR004895">
    <property type="entry name" value="Prenylated_rab_accept_PRA1"/>
</dbReference>
<dbReference type="PANTHER" id="PTHR12859:SF1">
    <property type="entry name" value="PRA1 FAMILY PROTEIN 2"/>
    <property type="match status" value="1"/>
</dbReference>
<dbReference type="PANTHER" id="PTHR12859">
    <property type="entry name" value="PRA1 PROTEIN"/>
    <property type="match status" value="1"/>
</dbReference>
<dbReference type="Pfam" id="PF03208">
    <property type="entry name" value="PRA1"/>
    <property type="match status" value="1"/>
</dbReference>
<comment type="function">
    <text evidence="1">May be involved in ER/Golgi transport and vesicular traffic. Plays a proapoptotic role in cerulenin-induced neuroblastoma apoptosis (By similarity).</text>
</comment>
<comment type="subunit">
    <text evidence="1">Interacts with CCR5 and GDE1.</text>
</comment>
<comment type="subcellular location">
    <subcellularLocation>
        <location evidence="1">Endosome membrane</location>
        <topology evidence="1">Multi-pass membrane protein</topology>
    </subcellularLocation>
</comment>
<comment type="similarity">
    <text evidence="3">Belongs to the PRA1 family.</text>
</comment>
<feature type="chain" id="PRO_0000234486" description="PRA1 family protein 2">
    <location>
        <begin position="1"/>
        <end position="178"/>
    </location>
</feature>
<feature type="topological domain" description="Cytoplasmic" evidence="2">
    <location>
        <begin position="1"/>
        <end position="41"/>
    </location>
</feature>
<feature type="transmembrane region" description="Helical" evidence="2">
    <location>
        <begin position="42"/>
        <end position="62"/>
    </location>
</feature>
<feature type="topological domain" description="Extracellular" evidence="2">
    <location>
        <begin position="63"/>
        <end position="64"/>
    </location>
</feature>
<feature type="transmembrane region" description="Helical" evidence="2">
    <location>
        <begin position="65"/>
        <end position="85"/>
    </location>
</feature>
<feature type="topological domain" description="Cytoplasmic" evidence="2">
    <location>
        <begin position="86"/>
        <end position="96"/>
    </location>
</feature>
<feature type="transmembrane region" description="Helical" evidence="2">
    <location>
        <begin position="97"/>
        <end position="119"/>
    </location>
</feature>
<feature type="topological domain" description="Extracellular" evidence="2">
    <location>
        <begin position="120"/>
        <end position="122"/>
    </location>
</feature>
<feature type="transmembrane region" description="Helical" evidence="2">
    <location>
        <begin position="123"/>
        <end position="140"/>
    </location>
</feature>
<feature type="topological domain" description="Cytoplasmic" evidence="2">
    <location>
        <begin position="141"/>
        <end position="178"/>
    </location>
</feature>
<reference key="1">
    <citation type="submission" date="2005-06" db="EMBL/GenBank/DDBJ databases">
        <title>DNA sequences of macaque genes expressed in brain or testis and its evolutionary implications.</title>
        <authorList>
            <consortium name="International consortium for macaque cDNA sequencing and analysis"/>
        </authorList>
    </citation>
    <scope>NUCLEOTIDE SEQUENCE [LARGE SCALE MRNA]</scope>
    <source>
        <tissue>Temporal cortex</tissue>
    </source>
</reference>
<protein>
    <recommendedName>
        <fullName>PRA1 family protein 2</fullName>
    </recommendedName>
</protein>
<organism>
    <name type="scientific">Macaca fascicularis</name>
    <name type="common">Crab-eating macaque</name>
    <name type="synonym">Cynomolgus monkey</name>
    <dbReference type="NCBI Taxonomy" id="9541"/>
    <lineage>
        <taxon>Eukaryota</taxon>
        <taxon>Metazoa</taxon>
        <taxon>Chordata</taxon>
        <taxon>Craniata</taxon>
        <taxon>Vertebrata</taxon>
        <taxon>Euteleostomi</taxon>
        <taxon>Mammalia</taxon>
        <taxon>Eutheria</taxon>
        <taxon>Euarchontoglires</taxon>
        <taxon>Primates</taxon>
        <taxon>Haplorrhini</taxon>
        <taxon>Catarrhini</taxon>
        <taxon>Cercopithecidae</taxon>
        <taxon>Cercopithecinae</taxon>
        <taxon>Macaca</taxon>
    </lineage>
</organism>
<proteinExistence type="evidence at transcript level"/>
<evidence type="ECO:0000250" key="1"/>
<evidence type="ECO:0000255" key="2"/>
<evidence type="ECO:0000305" key="3"/>
<keyword id="KW-0967">Endosome</keyword>
<keyword id="KW-0472">Membrane</keyword>
<keyword id="KW-0653">Protein transport</keyword>
<keyword id="KW-1185">Reference proteome</keyword>
<keyword id="KW-0812">Transmembrane</keyword>
<keyword id="KW-1133">Transmembrane helix</keyword>
<keyword id="KW-0813">Transport</keyword>